<accession>A6LNY7</accession>
<keyword id="KW-0143">Chaperone</keyword>
<keyword id="KW-0963">Cytoplasm</keyword>
<keyword id="KW-0690">Ribosome biogenesis</keyword>
<keyword id="KW-0698">rRNA processing</keyword>
<name>RIMM_THEM4</name>
<comment type="function">
    <text evidence="1">An accessory protein needed during the final step in the assembly of 30S ribosomal subunit, possibly for assembly of the head region. Essential for efficient processing of 16S rRNA. May be needed both before and after RbfA during the maturation of 16S rRNA. It has affinity for free ribosomal 30S subunits but not for 70S ribosomes.</text>
</comment>
<comment type="subunit">
    <text evidence="1">Binds ribosomal protein uS19.</text>
</comment>
<comment type="subcellular location">
    <subcellularLocation>
        <location evidence="1">Cytoplasm</location>
    </subcellularLocation>
</comment>
<comment type="domain">
    <text evidence="1">The PRC barrel domain binds ribosomal protein uS19.</text>
</comment>
<comment type="similarity">
    <text evidence="1">Belongs to the RimM family.</text>
</comment>
<gene>
    <name evidence="1" type="primary">rimM</name>
    <name type="ordered locus">Tmel_1803</name>
</gene>
<protein>
    <recommendedName>
        <fullName evidence="1">Ribosome maturation factor RimM</fullName>
    </recommendedName>
</protein>
<dbReference type="EMBL" id="CP000716">
    <property type="protein sequence ID" value="ABR31638.1"/>
    <property type="molecule type" value="Genomic_DNA"/>
</dbReference>
<dbReference type="RefSeq" id="WP_012057996.1">
    <property type="nucleotide sequence ID" value="NC_009616.1"/>
</dbReference>
<dbReference type="SMR" id="A6LNY7"/>
<dbReference type="STRING" id="391009.Tmel_1803"/>
<dbReference type="KEGG" id="tme:Tmel_1803"/>
<dbReference type="eggNOG" id="COG0806">
    <property type="taxonomic scope" value="Bacteria"/>
</dbReference>
<dbReference type="HOGENOM" id="CLU_077636_3_2_0"/>
<dbReference type="OrthoDB" id="9810331at2"/>
<dbReference type="Proteomes" id="UP000001110">
    <property type="component" value="Chromosome"/>
</dbReference>
<dbReference type="GO" id="GO:0005737">
    <property type="term" value="C:cytoplasm"/>
    <property type="evidence" value="ECO:0007669"/>
    <property type="project" value="UniProtKB-SubCell"/>
</dbReference>
<dbReference type="GO" id="GO:0005840">
    <property type="term" value="C:ribosome"/>
    <property type="evidence" value="ECO:0007669"/>
    <property type="project" value="InterPro"/>
</dbReference>
<dbReference type="GO" id="GO:0043022">
    <property type="term" value="F:ribosome binding"/>
    <property type="evidence" value="ECO:0007669"/>
    <property type="project" value="InterPro"/>
</dbReference>
<dbReference type="GO" id="GO:0042274">
    <property type="term" value="P:ribosomal small subunit biogenesis"/>
    <property type="evidence" value="ECO:0007669"/>
    <property type="project" value="UniProtKB-UniRule"/>
</dbReference>
<dbReference type="GO" id="GO:0006364">
    <property type="term" value="P:rRNA processing"/>
    <property type="evidence" value="ECO:0007669"/>
    <property type="project" value="UniProtKB-UniRule"/>
</dbReference>
<dbReference type="Gene3D" id="2.30.30.240">
    <property type="entry name" value="PRC-barrel domain"/>
    <property type="match status" value="1"/>
</dbReference>
<dbReference type="Gene3D" id="2.40.30.60">
    <property type="entry name" value="RimM"/>
    <property type="match status" value="1"/>
</dbReference>
<dbReference type="HAMAP" id="MF_00014">
    <property type="entry name" value="Ribosome_mat_RimM"/>
    <property type="match status" value="1"/>
</dbReference>
<dbReference type="InterPro" id="IPR011033">
    <property type="entry name" value="PRC_barrel-like_sf"/>
</dbReference>
<dbReference type="InterPro" id="IPR056792">
    <property type="entry name" value="PRC_RimM"/>
</dbReference>
<dbReference type="InterPro" id="IPR011961">
    <property type="entry name" value="RimM"/>
</dbReference>
<dbReference type="InterPro" id="IPR002676">
    <property type="entry name" value="RimM_N"/>
</dbReference>
<dbReference type="InterPro" id="IPR036976">
    <property type="entry name" value="RimM_N_sf"/>
</dbReference>
<dbReference type="InterPro" id="IPR009000">
    <property type="entry name" value="Transl_B-barrel_sf"/>
</dbReference>
<dbReference type="NCBIfam" id="TIGR02273">
    <property type="entry name" value="16S_RimM"/>
    <property type="match status" value="1"/>
</dbReference>
<dbReference type="PANTHER" id="PTHR33692">
    <property type="entry name" value="RIBOSOME MATURATION FACTOR RIMM"/>
    <property type="match status" value="1"/>
</dbReference>
<dbReference type="PANTHER" id="PTHR33692:SF1">
    <property type="entry name" value="RIBOSOME MATURATION FACTOR RIMM"/>
    <property type="match status" value="1"/>
</dbReference>
<dbReference type="Pfam" id="PF24986">
    <property type="entry name" value="PRC_RimM"/>
    <property type="match status" value="1"/>
</dbReference>
<dbReference type="Pfam" id="PF01782">
    <property type="entry name" value="RimM"/>
    <property type="match status" value="1"/>
</dbReference>
<dbReference type="SUPFAM" id="SSF50346">
    <property type="entry name" value="PRC-barrel domain"/>
    <property type="match status" value="1"/>
</dbReference>
<dbReference type="SUPFAM" id="SSF50447">
    <property type="entry name" value="Translation proteins"/>
    <property type="match status" value="1"/>
</dbReference>
<organism>
    <name type="scientific">Thermosipho melanesiensis (strain DSM 12029 / CIP 104789 / BI429)</name>
    <dbReference type="NCBI Taxonomy" id="391009"/>
    <lineage>
        <taxon>Bacteria</taxon>
        <taxon>Thermotogati</taxon>
        <taxon>Thermotogota</taxon>
        <taxon>Thermotogae</taxon>
        <taxon>Thermotogales</taxon>
        <taxon>Fervidobacteriaceae</taxon>
        <taxon>Thermosipho</taxon>
    </lineage>
</organism>
<evidence type="ECO:0000255" key="1">
    <source>
        <dbReference type="HAMAP-Rule" id="MF_00014"/>
    </source>
</evidence>
<reference key="1">
    <citation type="submission" date="2007-05" db="EMBL/GenBank/DDBJ databases">
        <title>Complete sequence of Thermosipho melanesiensis BI429.</title>
        <authorList>
            <consortium name="US DOE Joint Genome Institute"/>
            <person name="Copeland A."/>
            <person name="Lucas S."/>
            <person name="Lapidus A."/>
            <person name="Barry K."/>
            <person name="Glavina del Rio T."/>
            <person name="Dalin E."/>
            <person name="Tice H."/>
            <person name="Pitluck S."/>
            <person name="Chertkov O."/>
            <person name="Brettin T."/>
            <person name="Bruce D."/>
            <person name="Detter J.C."/>
            <person name="Han C."/>
            <person name="Schmutz J."/>
            <person name="Larimer F."/>
            <person name="Land M."/>
            <person name="Hauser L."/>
            <person name="Kyrpides N."/>
            <person name="Mikhailova N."/>
            <person name="Nelson K."/>
            <person name="Gogarten J.P."/>
            <person name="Noll K."/>
            <person name="Richardson P."/>
        </authorList>
    </citation>
    <scope>NUCLEOTIDE SEQUENCE [LARGE SCALE GENOMIC DNA]</scope>
    <source>
        <strain>DSM 12029 / CIP 104789 / BI429</strain>
    </source>
</reference>
<feature type="chain" id="PRO_0000321767" description="Ribosome maturation factor RimM">
    <location>
        <begin position="1"/>
        <end position="178"/>
    </location>
</feature>
<feature type="domain" description="PRC barrel" evidence="1">
    <location>
        <begin position="104"/>
        <end position="177"/>
    </location>
</feature>
<proteinExistence type="inferred from homology"/>
<sequence length="178" mass="20480">MIKTLHELLKDKVPIAVLGKTHGLNGELRLFPLTNMPEVIESLEEVFIYNEKVKKLLIGRIIHMSLANGYYIVKFRGIDTLNDAKKFVGSTLYIEKSRLPILSSDEYYFYEVIGMKVYDEKGIFLGNIDEVIQTGSNDVFVINKDTKDEILIPVIKEYVLQIDKKSNKIVVKLPEWLD</sequence>